<keyword id="KW-0002">3D-structure</keyword>
<keyword id="KW-0963">Cytoplasm</keyword>
<keyword id="KW-0206">Cytoskeleton</keyword>
<keyword id="KW-0342">GTP-binding</keyword>
<keyword id="KW-0460">Magnesium</keyword>
<keyword id="KW-0479">Metal-binding</keyword>
<keyword id="KW-0493">Microtubule</keyword>
<keyword id="KW-0547">Nucleotide-binding</keyword>
<keyword id="KW-1185">Reference proteome</keyword>
<organism>
    <name type="scientific">Caenorhabditis elegans</name>
    <dbReference type="NCBI Taxonomy" id="6239"/>
    <lineage>
        <taxon>Eukaryota</taxon>
        <taxon>Metazoa</taxon>
        <taxon>Ecdysozoa</taxon>
        <taxon>Nematoda</taxon>
        <taxon>Chromadorea</taxon>
        <taxon>Rhabditida</taxon>
        <taxon>Rhabditina</taxon>
        <taxon>Rhabditomorpha</taxon>
        <taxon>Rhabditoidea</taxon>
        <taxon>Rhabditidae</taxon>
        <taxon>Peloderinae</taxon>
        <taxon>Caenorhabditis</taxon>
    </lineage>
</organism>
<proteinExistence type="evidence at protein level"/>
<name>TBB2_CAEEL</name>
<protein>
    <recommendedName>
        <fullName>Tubulin beta-2 chain</fullName>
    </recommendedName>
    <alternativeName>
        <fullName>Beta-2-tubulin</fullName>
    </alternativeName>
</protein>
<accession>P52275</accession>
<gene>
    <name type="primary">tbb-2</name>
    <name type="ORF">C36E8.5</name>
</gene>
<comment type="function">
    <text evidence="2 6">Tubulin is the major constituent of microtubules, a cylinder consisting of laterally associated linear protofilaments composed of alpha- and beta-tubulin heterodimers (By similarity). Microtubules grow by the addition of GTP-tubulin dimers to the microtubule end, where a stabilizing cap forms (By similarity). Below the cap, tubulin dimers are in GDP-bound state, owing to GTPase activity of alpha-tubulin (By similarity). Required for the normal dynamic behavior of the non-centrosomal microtubules in the epidermal syncytium (PubMed:31995031). Involved in the redistribution of microtubule end-binding protein EB1/ebp-2 caused by wounding (PubMed:31995031). Required to modulate expression in the epidermis of antimicrobial peptides, such as nlp-29, after wounding, or fungal infection (PubMed:31995031).</text>
</comment>
<comment type="cofactor">
    <cofactor evidence="1">
        <name>Mg(2+)</name>
        <dbReference type="ChEBI" id="CHEBI:18420"/>
    </cofactor>
</comment>
<comment type="subunit">
    <text evidence="2">Dimer of alpha and beta chains (By similarity). A typical microtubule is a hollow water-filled tube with an outer diameter of 25 nm and an inner diameter of 15 nm (By similarity). Alpha-beta heterodimers associate head-to-tail to form protofilaments running lengthwise along the microtubule wall with the beta-tubulin subunit facing the microtubule plus end conferring a structural polarity (By similarity). Microtubules usually have 13 protofilaments but different protofilament numbers can be found in some organisms and specialized cells (By similarity).</text>
</comment>
<comment type="subcellular location">
    <subcellularLocation>
        <location evidence="2">Cytoplasm</location>
        <location evidence="2">Cytoskeleton</location>
    </subcellularLocation>
</comment>
<comment type="PTM">
    <text evidence="4">Cleaved by caspase ced-3 in vitro.</text>
</comment>
<comment type="disruption phenotype">
    <text evidence="6">RNAi-mediated knockdown abolishes recruitment of microtubule end-binding protein EB1/ebp-2 to a wound site (PubMed:31995031). Almost completely abolishes induction of nlp-29 expression upon infection with Drechmeria coniospora (PubMed:31995031).</text>
</comment>
<comment type="similarity">
    <text evidence="7">Belongs to the tubulin family.</text>
</comment>
<sequence>MREIVHVQAGQCGNQIGSKFWEVISDEHGIQPDGTFKGETDLQLERIDVYYNEANNGKYVPRAVLVDLEPGTMDSVRSGPFGQLFRPDNFVFGQSGAGNNWAKGHYTEGAELVDNVLDVIRKEAEGCDCLQGFQLTHSLGGGTGSGMGTLLISKIREEYPDRIMSSFSVVPSPKVSDTVVEPYNATLSVHQLVENTDETYCIDNEALYDICYRTLKLTNPTYGDLNHLVSLTMSGVTTCLRFPGQLNADLRKLAVNMVPFPRLHFFMPGFAPLSAKGTQAYRALTVAELTQQMFDAKNMMAACDPRHGRYLTVAAMFRGRMSMREVDEQMLNVQNKNSSYFVEWIPNNVKTAVCDIPPRGLKMAATFVGNSTAIQELFKRISEQFTAMFRRKAFLHWYTGEGMDEMEFTEAESNMNDLISEYQQYQEATAEDDVDGYAEGEAGETYESEQ</sequence>
<dbReference type="EMBL" id="Z35597">
    <property type="protein sequence ID" value="CAA84648.1"/>
    <property type="molecule type" value="Genomic_DNA"/>
</dbReference>
<dbReference type="PIR" id="T19788">
    <property type="entry name" value="T19788"/>
</dbReference>
<dbReference type="RefSeq" id="NP_497806.1">
    <property type="nucleotide sequence ID" value="NM_065405.8"/>
</dbReference>
<dbReference type="PDB" id="6E88">
    <property type="method" value="EM"/>
    <property type="resolution" value="4.80 A"/>
    <property type="chains" value="B/D/J/K/N/O=1-426"/>
</dbReference>
<dbReference type="PDBsum" id="6E88"/>
<dbReference type="EMDB" id="EMD-9004"/>
<dbReference type="SMR" id="P52275"/>
<dbReference type="BioGRID" id="40756">
    <property type="interactions" value="27"/>
</dbReference>
<dbReference type="DIP" id="DIP-27189N"/>
<dbReference type="FunCoup" id="P52275">
    <property type="interactions" value="244"/>
</dbReference>
<dbReference type="STRING" id="6239.C36E8.5.4"/>
<dbReference type="PaxDb" id="6239-C36E8.5.1"/>
<dbReference type="PeptideAtlas" id="P52275"/>
<dbReference type="EnsemblMetazoa" id="C36E8.5.1">
    <property type="protein sequence ID" value="C36E8.5.1"/>
    <property type="gene ID" value="WBGene00006537"/>
</dbReference>
<dbReference type="GeneID" id="175519"/>
<dbReference type="KEGG" id="cel:CELE_C36E8.5"/>
<dbReference type="UCSC" id="C36E8.5.1">
    <property type="organism name" value="c. elegans"/>
</dbReference>
<dbReference type="AGR" id="WB:WBGene00006537"/>
<dbReference type="CTD" id="175519"/>
<dbReference type="WormBase" id="C36E8.5">
    <property type="protein sequence ID" value="CE00913"/>
    <property type="gene ID" value="WBGene00006537"/>
    <property type="gene designation" value="tbb-2"/>
</dbReference>
<dbReference type="eggNOG" id="KOG1375">
    <property type="taxonomic scope" value="Eukaryota"/>
</dbReference>
<dbReference type="GeneTree" id="ENSGT01060000253275"/>
<dbReference type="HOGENOM" id="CLU_015718_1_1_1"/>
<dbReference type="InParanoid" id="P52275"/>
<dbReference type="OMA" id="YIYSICH"/>
<dbReference type="OrthoDB" id="1662883at2759"/>
<dbReference type="PhylomeDB" id="P52275"/>
<dbReference type="Reactome" id="R-CEL-5620924">
    <property type="pathway name" value="Intraflagellar transport"/>
</dbReference>
<dbReference type="Reactome" id="R-CEL-6798695">
    <property type="pathway name" value="Neutrophil degranulation"/>
</dbReference>
<dbReference type="Reactome" id="R-CEL-6807878">
    <property type="pathway name" value="COPI-mediated anterograde transport"/>
</dbReference>
<dbReference type="Reactome" id="R-CEL-6811434">
    <property type="pathway name" value="COPI-dependent Golgi-to-ER retrograde traffic"/>
</dbReference>
<dbReference type="Reactome" id="R-CEL-6811436">
    <property type="pathway name" value="COPI-independent Golgi-to-ER retrograde traffic"/>
</dbReference>
<dbReference type="Reactome" id="R-CEL-983189">
    <property type="pathway name" value="Kinesins"/>
</dbReference>
<dbReference type="PRO" id="PR:P52275"/>
<dbReference type="Proteomes" id="UP000001940">
    <property type="component" value="Chromosome III"/>
</dbReference>
<dbReference type="Bgee" id="WBGene00006537">
    <property type="expression patterns" value="Expressed in embryo and 5 other cell types or tissues"/>
</dbReference>
<dbReference type="GO" id="GO:0005737">
    <property type="term" value="C:cytoplasm"/>
    <property type="evidence" value="ECO:0000318"/>
    <property type="project" value="GO_Central"/>
</dbReference>
<dbReference type="GO" id="GO:0005874">
    <property type="term" value="C:microtubule"/>
    <property type="evidence" value="ECO:0000318"/>
    <property type="project" value="GO_Central"/>
</dbReference>
<dbReference type="GO" id="GO:0005876">
    <property type="term" value="C:spindle microtubule"/>
    <property type="evidence" value="ECO:0000314"/>
    <property type="project" value="WormBase"/>
</dbReference>
<dbReference type="GO" id="GO:0045298">
    <property type="term" value="C:tubulin complex"/>
    <property type="evidence" value="ECO:0000250"/>
    <property type="project" value="WormBase"/>
</dbReference>
<dbReference type="GO" id="GO:0005525">
    <property type="term" value="F:GTP binding"/>
    <property type="evidence" value="ECO:0000318"/>
    <property type="project" value="GO_Central"/>
</dbReference>
<dbReference type="GO" id="GO:0003924">
    <property type="term" value="F:GTPase activity"/>
    <property type="evidence" value="ECO:0007669"/>
    <property type="project" value="InterPro"/>
</dbReference>
<dbReference type="GO" id="GO:0046872">
    <property type="term" value="F:metal ion binding"/>
    <property type="evidence" value="ECO:0007669"/>
    <property type="project" value="UniProtKB-KW"/>
</dbReference>
<dbReference type="GO" id="GO:0005200">
    <property type="term" value="F:structural constituent of cytoskeleton"/>
    <property type="evidence" value="ECO:0000318"/>
    <property type="project" value="GO_Central"/>
</dbReference>
<dbReference type="GO" id="GO:0000212">
    <property type="term" value="P:meiotic spindle organization"/>
    <property type="evidence" value="ECO:0000316"/>
    <property type="project" value="WormBase"/>
</dbReference>
<dbReference type="GO" id="GO:0000226">
    <property type="term" value="P:microtubule cytoskeleton organization"/>
    <property type="evidence" value="ECO:0000318"/>
    <property type="project" value="GO_Central"/>
</dbReference>
<dbReference type="GO" id="GO:0000278">
    <property type="term" value="P:mitotic cell cycle"/>
    <property type="evidence" value="ECO:0000318"/>
    <property type="project" value="GO_Central"/>
</dbReference>
<dbReference type="CDD" id="cd02187">
    <property type="entry name" value="beta_tubulin"/>
    <property type="match status" value="1"/>
</dbReference>
<dbReference type="FunFam" id="1.10.287.600:FF:000002">
    <property type="entry name" value="Tubulin beta chain"/>
    <property type="match status" value="1"/>
</dbReference>
<dbReference type="FunFam" id="3.30.1330.20:FF:000002">
    <property type="entry name" value="Tubulin beta chain"/>
    <property type="match status" value="1"/>
</dbReference>
<dbReference type="FunFam" id="3.40.50.1440:FF:000003">
    <property type="entry name" value="Tubulin beta chain"/>
    <property type="match status" value="1"/>
</dbReference>
<dbReference type="Gene3D" id="1.10.287.600">
    <property type="entry name" value="Helix hairpin bin"/>
    <property type="match status" value="1"/>
</dbReference>
<dbReference type="Gene3D" id="3.30.1330.20">
    <property type="entry name" value="Tubulin/FtsZ, C-terminal domain"/>
    <property type="match status" value="1"/>
</dbReference>
<dbReference type="Gene3D" id="3.40.50.1440">
    <property type="entry name" value="Tubulin/FtsZ, GTPase domain"/>
    <property type="match status" value="1"/>
</dbReference>
<dbReference type="InterPro" id="IPR013838">
    <property type="entry name" value="Beta-tubulin_BS"/>
</dbReference>
<dbReference type="InterPro" id="IPR002453">
    <property type="entry name" value="Beta_tubulin"/>
</dbReference>
<dbReference type="InterPro" id="IPR008280">
    <property type="entry name" value="Tub_FtsZ_C"/>
</dbReference>
<dbReference type="InterPro" id="IPR000217">
    <property type="entry name" value="Tubulin"/>
</dbReference>
<dbReference type="InterPro" id="IPR037103">
    <property type="entry name" value="Tubulin/FtsZ-like_C"/>
</dbReference>
<dbReference type="InterPro" id="IPR018316">
    <property type="entry name" value="Tubulin/FtsZ_2-layer-sand-dom"/>
</dbReference>
<dbReference type="InterPro" id="IPR036525">
    <property type="entry name" value="Tubulin/FtsZ_GTPase_sf"/>
</dbReference>
<dbReference type="InterPro" id="IPR023123">
    <property type="entry name" value="Tubulin_C"/>
</dbReference>
<dbReference type="InterPro" id="IPR017975">
    <property type="entry name" value="Tubulin_CS"/>
</dbReference>
<dbReference type="InterPro" id="IPR003008">
    <property type="entry name" value="Tubulin_FtsZ_GTPase"/>
</dbReference>
<dbReference type="PANTHER" id="PTHR11588">
    <property type="entry name" value="TUBULIN"/>
    <property type="match status" value="1"/>
</dbReference>
<dbReference type="Pfam" id="PF00091">
    <property type="entry name" value="Tubulin"/>
    <property type="match status" value="1"/>
</dbReference>
<dbReference type="Pfam" id="PF03953">
    <property type="entry name" value="Tubulin_C"/>
    <property type="match status" value="1"/>
</dbReference>
<dbReference type="PRINTS" id="PR01163">
    <property type="entry name" value="BETATUBULIN"/>
</dbReference>
<dbReference type="PRINTS" id="PR01161">
    <property type="entry name" value="TUBULIN"/>
</dbReference>
<dbReference type="SMART" id="SM00864">
    <property type="entry name" value="Tubulin"/>
    <property type="match status" value="1"/>
</dbReference>
<dbReference type="SMART" id="SM00865">
    <property type="entry name" value="Tubulin_C"/>
    <property type="match status" value="1"/>
</dbReference>
<dbReference type="SUPFAM" id="SSF55307">
    <property type="entry name" value="Tubulin C-terminal domain-like"/>
    <property type="match status" value="1"/>
</dbReference>
<dbReference type="SUPFAM" id="SSF52490">
    <property type="entry name" value="Tubulin nucleotide-binding domain-like"/>
    <property type="match status" value="1"/>
</dbReference>
<dbReference type="PROSITE" id="PS00227">
    <property type="entry name" value="TUBULIN"/>
    <property type="match status" value="1"/>
</dbReference>
<dbReference type="PROSITE" id="PS00228">
    <property type="entry name" value="TUBULIN_B_AUTOREG"/>
    <property type="match status" value="1"/>
</dbReference>
<evidence type="ECO:0000250" key="1">
    <source>
        <dbReference type="UniProtKB" id="P68363"/>
    </source>
</evidence>
<evidence type="ECO:0000250" key="2">
    <source>
        <dbReference type="UniProtKB" id="Q13509"/>
    </source>
</evidence>
<evidence type="ECO:0000256" key="3">
    <source>
        <dbReference type="SAM" id="MobiDB-lite"/>
    </source>
</evidence>
<evidence type="ECO:0000269" key="4">
    <source>
    </source>
</evidence>
<evidence type="ECO:0000269" key="5">
    <source>
    </source>
</evidence>
<evidence type="ECO:0000269" key="6">
    <source>
    </source>
</evidence>
<evidence type="ECO:0000305" key="7"/>
<reference key="1">
    <citation type="journal article" date="1998" name="Science">
        <title>Genome sequence of the nematode C. elegans: a platform for investigating biology.</title>
        <authorList>
            <consortium name="The C. elegans sequencing consortium"/>
        </authorList>
    </citation>
    <scope>NUCLEOTIDE SEQUENCE [LARGE SCALE GENOMIC DNA]</scope>
    <source>
        <strain>Bristol N2</strain>
    </source>
</reference>
<reference key="2">
    <citation type="journal article" date="2007" name="J. Biol. Chem.">
        <title>Establishing a blueprint for CED-3-dependent killing through identification of multiple substrates for this protease.</title>
        <authorList>
            <person name="Taylor R.C."/>
            <person name="Brumatti G."/>
            <person name="Ito S."/>
            <person name="Hengartner M.O."/>
            <person name="Derry W.B."/>
            <person name="Martin S.J."/>
        </authorList>
    </citation>
    <scope>PROTEOLYTIC CLEAVAGE</scope>
    <scope>MUTAGENESIS OF ASP-404; ASP-417 AND ASP-435</scope>
</reference>
<reference key="3">
    <citation type="journal article" date="2012" name="Mol. Biol. Cell">
        <title>UNC-89 (obscurin) binds to MEL-26, a BTB-domain protein, and affects the function of MEI-1 (katanin) in striated muscle of Caenorhabditis elegans.</title>
        <authorList>
            <person name="Wilson K.J."/>
            <person name="Qadota H."/>
            <person name="Mains P.E."/>
            <person name="Benian G.M."/>
        </authorList>
    </citation>
    <scope>MUTAGENESIS OF GLU-439</scope>
</reference>
<reference evidence="7" key="4">
    <citation type="journal article" date="2020" name="Elife">
        <title>Microtubule plus-end dynamics link wound repair to the innate immune response.</title>
        <authorList>
            <person name="Taffoni C."/>
            <person name="Omi S."/>
            <person name="Huber C."/>
            <person name="Mailfert S."/>
            <person name="Fallet M."/>
            <person name="Rupprecht J.F."/>
            <person name="Ewbank J.J."/>
            <person name="Pujol N."/>
        </authorList>
    </citation>
    <scope>FUNCTION</scope>
    <scope>DISRUPTION PHENOTYPE</scope>
</reference>
<feature type="chain" id="PRO_0000048287" description="Tubulin beta-2 chain">
    <location>
        <begin position="1"/>
        <end position="450"/>
    </location>
</feature>
<feature type="region of interest" description="Disordered" evidence="3">
    <location>
        <begin position="428"/>
        <end position="450"/>
    </location>
</feature>
<feature type="compositionally biased region" description="Acidic residues" evidence="3">
    <location>
        <begin position="429"/>
        <end position="450"/>
    </location>
</feature>
<feature type="binding site" evidence="2">
    <location>
        <position position="11"/>
    </location>
    <ligand>
        <name>GTP</name>
        <dbReference type="ChEBI" id="CHEBI:37565"/>
    </ligand>
</feature>
<feature type="binding site" evidence="1">
    <location>
        <position position="69"/>
    </location>
    <ligand>
        <name>GTP</name>
        <dbReference type="ChEBI" id="CHEBI:37565"/>
    </ligand>
</feature>
<feature type="binding site" evidence="1">
    <location>
        <position position="69"/>
    </location>
    <ligand>
        <name>Mg(2+)</name>
        <dbReference type="ChEBI" id="CHEBI:18420"/>
    </ligand>
</feature>
<feature type="binding site" evidence="2">
    <location>
        <position position="138"/>
    </location>
    <ligand>
        <name>GTP</name>
        <dbReference type="ChEBI" id="CHEBI:37565"/>
    </ligand>
</feature>
<feature type="binding site" evidence="2">
    <location>
        <position position="142"/>
    </location>
    <ligand>
        <name>GTP</name>
        <dbReference type="ChEBI" id="CHEBI:37565"/>
    </ligand>
</feature>
<feature type="binding site" evidence="2">
    <location>
        <position position="143"/>
    </location>
    <ligand>
        <name>GTP</name>
        <dbReference type="ChEBI" id="CHEBI:37565"/>
    </ligand>
</feature>
<feature type="binding site" evidence="2">
    <location>
        <position position="144"/>
    </location>
    <ligand>
        <name>GTP</name>
        <dbReference type="ChEBI" id="CHEBI:37565"/>
    </ligand>
</feature>
<feature type="binding site" evidence="2">
    <location>
        <position position="204"/>
    </location>
    <ligand>
        <name>GTP</name>
        <dbReference type="ChEBI" id="CHEBI:37565"/>
    </ligand>
</feature>
<feature type="binding site" evidence="2">
    <location>
        <position position="226"/>
    </location>
    <ligand>
        <name>GTP</name>
        <dbReference type="ChEBI" id="CHEBI:37565"/>
    </ligand>
</feature>
<feature type="mutagenesis site" description="Partial reduction in ced-3-mediated cleavage; when associated with E-417 and E-435." evidence="4">
    <original>D</original>
    <variation>E</variation>
    <location>
        <position position="404"/>
    </location>
</feature>
<feature type="mutagenesis site" description="Partial reduction in ced-3-mediated cleavage; when associated with E-404 and E-435." evidence="4">
    <original>D</original>
    <variation>E</variation>
    <location>
        <position position="417"/>
    </location>
</feature>
<feature type="mutagenesis site" description="Partial reduction in ced-3-mediated cleavage; when associated with E-404 and E-417." evidence="4">
    <original>D</original>
    <variation>E</variation>
    <location>
        <position position="435"/>
    </location>
</feature>
<feature type="mutagenesis site" description="In sb26; no effect on thick filament organization in body wall muscles. Partially restores thick filament organization in a mel-26 (ct61sb4) mutant background." evidence="5">
    <original>E</original>
    <variation>K</variation>
    <location>
        <position position="439"/>
    </location>
</feature>